<proteinExistence type="inferred from homology"/>
<reference key="1">
    <citation type="journal article" date="2005" name="Nat. Biotechnol.">
        <title>The genome sequence of the ethanologenic bacterium Zymomonas mobilis ZM4.</title>
        <authorList>
            <person name="Seo J.-S."/>
            <person name="Chong H."/>
            <person name="Park H.S."/>
            <person name="Yoon K.-O."/>
            <person name="Jung C."/>
            <person name="Kim J.J."/>
            <person name="Hong J.H."/>
            <person name="Kim H."/>
            <person name="Kim J.-H."/>
            <person name="Kil J.-I."/>
            <person name="Park C.J."/>
            <person name="Oh H.-M."/>
            <person name="Lee J.-S."/>
            <person name="Jin S.-J."/>
            <person name="Um H.-W."/>
            <person name="Lee H.-J."/>
            <person name="Oh S.-J."/>
            <person name="Kim J.Y."/>
            <person name="Kang H.L."/>
            <person name="Lee S.Y."/>
            <person name="Lee K.J."/>
            <person name="Kang H.S."/>
        </authorList>
    </citation>
    <scope>NUCLEOTIDE SEQUENCE [LARGE SCALE GENOMIC DNA]</scope>
    <source>
        <strain>ATCC 31821 / ZM4 / CP4</strain>
    </source>
</reference>
<name>RISB_ZYMMO</name>
<gene>
    <name evidence="1" type="primary">ribH</name>
    <name type="ordered locus">ZMO0473</name>
</gene>
<evidence type="ECO:0000255" key="1">
    <source>
        <dbReference type="HAMAP-Rule" id="MF_00178"/>
    </source>
</evidence>
<keyword id="KW-1185">Reference proteome</keyword>
<keyword id="KW-0686">Riboflavin biosynthesis</keyword>
<keyword id="KW-0808">Transferase</keyword>
<feature type="chain" id="PRO_1000098258" description="6,7-dimethyl-8-ribityllumazine synthase">
    <location>
        <begin position="1"/>
        <end position="139"/>
    </location>
</feature>
<feature type="active site" description="Proton donor" evidence="1">
    <location>
        <position position="74"/>
    </location>
</feature>
<feature type="binding site" evidence="1">
    <location>
        <position position="11"/>
    </location>
    <ligand>
        <name>5-amino-6-(D-ribitylamino)uracil</name>
        <dbReference type="ChEBI" id="CHEBI:15934"/>
    </ligand>
</feature>
<feature type="binding site" evidence="1">
    <location>
        <begin position="42"/>
        <end position="44"/>
    </location>
    <ligand>
        <name>5-amino-6-(D-ribitylamino)uracil</name>
        <dbReference type="ChEBI" id="CHEBI:15934"/>
    </ligand>
</feature>
<feature type="binding site" evidence="1">
    <location>
        <begin position="66"/>
        <end position="68"/>
    </location>
    <ligand>
        <name>5-amino-6-(D-ribitylamino)uracil</name>
        <dbReference type="ChEBI" id="CHEBI:15934"/>
    </ligand>
</feature>
<feature type="binding site" evidence="1">
    <location>
        <begin position="71"/>
        <end position="72"/>
    </location>
    <ligand>
        <name>(2S)-2-hydroxy-3-oxobutyl phosphate</name>
        <dbReference type="ChEBI" id="CHEBI:58830"/>
    </ligand>
</feature>
<feature type="binding site" evidence="1">
    <location>
        <position position="98"/>
    </location>
    <ligand>
        <name>5-amino-6-(D-ribitylamino)uracil</name>
        <dbReference type="ChEBI" id="CHEBI:15934"/>
    </ligand>
</feature>
<feature type="binding site" evidence="1">
    <location>
        <position position="112"/>
    </location>
    <ligand>
        <name>(2S)-2-hydroxy-3-oxobutyl phosphate</name>
        <dbReference type="ChEBI" id="CHEBI:58830"/>
    </ligand>
</feature>
<sequence>MAKFLIVEARFYSHLNDMLIQGAKQAIEEAGHECEVITVPGALEIPAAITMASDTGLYDAFVALGVVIRGETYHFEIVASESARGVMALTLDGLVIGNGILTVENEQQALVRADPQQKNKGGDAAKAAITMFNLKKKLS</sequence>
<comment type="function">
    <text evidence="1">Catalyzes the formation of 6,7-dimethyl-8-ribityllumazine by condensation of 5-amino-6-(D-ribitylamino)uracil with 3,4-dihydroxy-2-butanone 4-phosphate. This is the penultimate step in the biosynthesis of riboflavin.</text>
</comment>
<comment type="catalytic activity">
    <reaction evidence="1">
        <text>(2S)-2-hydroxy-3-oxobutyl phosphate + 5-amino-6-(D-ribitylamino)uracil = 6,7-dimethyl-8-(1-D-ribityl)lumazine + phosphate + 2 H2O + H(+)</text>
        <dbReference type="Rhea" id="RHEA:26152"/>
        <dbReference type="ChEBI" id="CHEBI:15377"/>
        <dbReference type="ChEBI" id="CHEBI:15378"/>
        <dbReference type="ChEBI" id="CHEBI:15934"/>
        <dbReference type="ChEBI" id="CHEBI:43474"/>
        <dbReference type="ChEBI" id="CHEBI:58201"/>
        <dbReference type="ChEBI" id="CHEBI:58830"/>
        <dbReference type="EC" id="2.5.1.78"/>
    </reaction>
</comment>
<comment type="pathway">
    <text evidence="1">Cofactor biosynthesis; riboflavin biosynthesis; riboflavin from 2-hydroxy-3-oxobutyl phosphate and 5-amino-6-(D-ribitylamino)uracil: step 1/2.</text>
</comment>
<comment type="similarity">
    <text evidence="1">Belongs to the DMRL synthase family.</text>
</comment>
<protein>
    <recommendedName>
        <fullName evidence="1">6,7-dimethyl-8-ribityllumazine synthase</fullName>
        <shortName evidence="1">DMRL synthase</shortName>
        <shortName evidence="1">LS</shortName>
        <shortName evidence="1">Lumazine synthase</shortName>
        <ecNumber evidence="1">2.5.1.78</ecNumber>
    </recommendedName>
</protein>
<organism>
    <name type="scientific">Zymomonas mobilis subsp. mobilis (strain ATCC 31821 / ZM4 / CP4)</name>
    <dbReference type="NCBI Taxonomy" id="264203"/>
    <lineage>
        <taxon>Bacteria</taxon>
        <taxon>Pseudomonadati</taxon>
        <taxon>Pseudomonadota</taxon>
        <taxon>Alphaproteobacteria</taxon>
        <taxon>Sphingomonadales</taxon>
        <taxon>Zymomonadaceae</taxon>
        <taxon>Zymomonas</taxon>
    </lineage>
</organism>
<dbReference type="EC" id="2.5.1.78" evidence="1"/>
<dbReference type="EMBL" id="AE008692">
    <property type="protein sequence ID" value="AAV89097.1"/>
    <property type="molecule type" value="Genomic_DNA"/>
</dbReference>
<dbReference type="RefSeq" id="WP_011240378.1">
    <property type="nucleotide sequence ID" value="NZ_CP035711.1"/>
</dbReference>
<dbReference type="SMR" id="Q5NQA8"/>
<dbReference type="STRING" id="264203.ZMO0473"/>
<dbReference type="GeneID" id="79904337"/>
<dbReference type="KEGG" id="zmo:ZMO0473"/>
<dbReference type="eggNOG" id="COG0054">
    <property type="taxonomic scope" value="Bacteria"/>
</dbReference>
<dbReference type="HOGENOM" id="CLU_089358_1_2_5"/>
<dbReference type="UniPathway" id="UPA00275">
    <property type="reaction ID" value="UER00404"/>
</dbReference>
<dbReference type="Proteomes" id="UP000001173">
    <property type="component" value="Chromosome"/>
</dbReference>
<dbReference type="GO" id="GO:0005829">
    <property type="term" value="C:cytosol"/>
    <property type="evidence" value="ECO:0007669"/>
    <property type="project" value="TreeGrafter"/>
</dbReference>
<dbReference type="GO" id="GO:0009349">
    <property type="term" value="C:riboflavin synthase complex"/>
    <property type="evidence" value="ECO:0007669"/>
    <property type="project" value="InterPro"/>
</dbReference>
<dbReference type="GO" id="GO:0000906">
    <property type="term" value="F:6,7-dimethyl-8-ribityllumazine synthase activity"/>
    <property type="evidence" value="ECO:0007669"/>
    <property type="project" value="UniProtKB-UniRule"/>
</dbReference>
<dbReference type="GO" id="GO:0009231">
    <property type="term" value="P:riboflavin biosynthetic process"/>
    <property type="evidence" value="ECO:0007669"/>
    <property type="project" value="UniProtKB-UniRule"/>
</dbReference>
<dbReference type="CDD" id="cd09209">
    <property type="entry name" value="Lumazine_synthase-I"/>
    <property type="match status" value="1"/>
</dbReference>
<dbReference type="Gene3D" id="3.40.50.960">
    <property type="entry name" value="Lumazine/riboflavin synthase"/>
    <property type="match status" value="1"/>
</dbReference>
<dbReference type="HAMAP" id="MF_00178">
    <property type="entry name" value="Lumazine_synth"/>
    <property type="match status" value="1"/>
</dbReference>
<dbReference type="InterPro" id="IPR034964">
    <property type="entry name" value="LS"/>
</dbReference>
<dbReference type="InterPro" id="IPR002180">
    <property type="entry name" value="LS/RS"/>
</dbReference>
<dbReference type="InterPro" id="IPR036467">
    <property type="entry name" value="LS/RS_sf"/>
</dbReference>
<dbReference type="NCBIfam" id="TIGR00114">
    <property type="entry name" value="lumazine-synth"/>
    <property type="match status" value="1"/>
</dbReference>
<dbReference type="PANTHER" id="PTHR21058:SF0">
    <property type="entry name" value="6,7-DIMETHYL-8-RIBITYLLUMAZINE SYNTHASE"/>
    <property type="match status" value="1"/>
</dbReference>
<dbReference type="PANTHER" id="PTHR21058">
    <property type="entry name" value="6,7-DIMETHYL-8-RIBITYLLUMAZINE SYNTHASE DMRL SYNTHASE LUMAZINE SYNTHASE"/>
    <property type="match status" value="1"/>
</dbReference>
<dbReference type="Pfam" id="PF00885">
    <property type="entry name" value="DMRL_synthase"/>
    <property type="match status" value="1"/>
</dbReference>
<dbReference type="SUPFAM" id="SSF52121">
    <property type="entry name" value="Lumazine synthase"/>
    <property type="match status" value="1"/>
</dbReference>
<accession>Q5NQA8</accession>